<reference key="1">
    <citation type="journal article" date="2005" name="PLoS Biol.">
        <title>The genomes of Oryza sativa: a history of duplications.</title>
        <authorList>
            <person name="Yu J."/>
            <person name="Wang J."/>
            <person name="Lin W."/>
            <person name="Li S."/>
            <person name="Li H."/>
            <person name="Zhou J."/>
            <person name="Ni P."/>
            <person name="Dong W."/>
            <person name="Hu S."/>
            <person name="Zeng C."/>
            <person name="Zhang J."/>
            <person name="Zhang Y."/>
            <person name="Li R."/>
            <person name="Xu Z."/>
            <person name="Li S."/>
            <person name="Li X."/>
            <person name="Zheng H."/>
            <person name="Cong L."/>
            <person name="Lin L."/>
            <person name="Yin J."/>
            <person name="Geng J."/>
            <person name="Li G."/>
            <person name="Shi J."/>
            <person name="Liu J."/>
            <person name="Lv H."/>
            <person name="Li J."/>
            <person name="Wang J."/>
            <person name="Deng Y."/>
            <person name="Ran L."/>
            <person name="Shi X."/>
            <person name="Wang X."/>
            <person name="Wu Q."/>
            <person name="Li C."/>
            <person name="Ren X."/>
            <person name="Wang J."/>
            <person name="Wang X."/>
            <person name="Li D."/>
            <person name="Liu D."/>
            <person name="Zhang X."/>
            <person name="Ji Z."/>
            <person name="Zhao W."/>
            <person name="Sun Y."/>
            <person name="Zhang Z."/>
            <person name="Bao J."/>
            <person name="Han Y."/>
            <person name="Dong L."/>
            <person name="Ji J."/>
            <person name="Chen P."/>
            <person name="Wu S."/>
            <person name="Liu J."/>
            <person name="Xiao Y."/>
            <person name="Bu D."/>
            <person name="Tan J."/>
            <person name="Yang L."/>
            <person name="Ye C."/>
            <person name="Zhang J."/>
            <person name="Xu J."/>
            <person name="Zhou Y."/>
            <person name="Yu Y."/>
            <person name="Zhang B."/>
            <person name="Zhuang S."/>
            <person name="Wei H."/>
            <person name="Liu B."/>
            <person name="Lei M."/>
            <person name="Yu H."/>
            <person name="Li Y."/>
            <person name="Xu H."/>
            <person name="Wei S."/>
            <person name="He X."/>
            <person name="Fang L."/>
            <person name="Zhang Z."/>
            <person name="Zhang Y."/>
            <person name="Huang X."/>
            <person name="Su Z."/>
            <person name="Tong W."/>
            <person name="Li J."/>
            <person name="Tong Z."/>
            <person name="Li S."/>
            <person name="Ye J."/>
            <person name="Wang L."/>
            <person name="Fang L."/>
            <person name="Lei T."/>
            <person name="Chen C.-S."/>
            <person name="Chen H.-C."/>
            <person name="Xu Z."/>
            <person name="Li H."/>
            <person name="Huang H."/>
            <person name="Zhang F."/>
            <person name="Xu H."/>
            <person name="Li N."/>
            <person name="Zhao C."/>
            <person name="Li S."/>
            <person name="Dong L."/>
            <person name="Huang Y."/>
            <person name="Li L."/>
            <person name="Xi Y."/>
            <person name="Qi Q."/>
            <person name="Li W."/>
            <person name="Zhang B."/>
            <person name="Hu W."/>
            <person name="Zhang Y."/>
            <person name="Tian X."/>
            <person name="Jiao Y."/>
            <person name="Liang X."/>
            <person name="Jin J."/>
            <person name="Gao L."/>
            <person name="Zheng W."/>
            <person name="Hao B."/>
            <person name="Liu S.-M."/>
            <person name="Wang W."/>
            <person name="Yuan L."/>
            <person name="Cao M."/>
            <person name="McDermott J."/>
            <person name="Samudrala R."/>
            <person name="Wang J."/>
            <person name="Wong G.K.-S."/>
            <person name="Yang H."/>
        </authorList>
    </citation>
    <scope>NUCLEOTIDE SEQUENCE [LARGE SCALE GENOMIC DNA]</scope>
    <source>
        <strain>cv. 93-11</strain>
    </source>
</reference>
<keyword id="KW-1185">Reference proteome</keyword>
<keyword id="KW-0808">Transferase</keyword>
<keyword id="KW-0833">Ubl conjugation pathway</keyword>
<accession>B8AXB6</accession>
<comment type="function">
    <text evidence="1">E3 UFM1-protein ligase that mediates ufmylation of target proteins.</text>
</comment>
<comment type="similarity">
    <text evidence="3">Belongs to the UFL1 family.</text>
</comment>
<proteinExistence type="inferred from homology"/>
<organism>
    <name type="scientific">Oryza sativa subsp. indica</name>
    <name type="common">Rice</name>
    <dbReference type="NCBI Taxonomy" id="39946"/>
    <lineage>
        <taxon>Eukaryota</taxon>
        <taxon>Viridiplantae</taxon>
        <taxon>Streptophyta</taxon>
        <taxon>Embryophyta</taxon>
        <taxon>Tracheophyta</taxon>
        <taxon>Spermatophyta</taxon>
        <taxon>Magnoliopsida</taxon>
        <taxon>Liliopsida</taxon>
        <taxon>Poales</taxon>
        <taxon>Poaceae</taxon>
        <taxon>BOP clade</taxon>
        <taxon>Oryzoideae</taxon>
        <taxon>Oryzeae</taxon>
        <taxon>Oryzinae</taxon>
        <taxon>Oryza</taxon>
        <taxon>Oryza sativa</taxon>
    </lineage>
</organism>
<feature type="chain" id="PRO_0000391895" description="E3 UFM1-protein ligase 1 homolog">
    <location>
        <begin position="1"/>
        <end position="812"/>
    </location>
</feature>
<feature type="region of interest" description="Disordered" evidence="2">
    <location>
        <begin position="389"/>
        <end position="495"/>
    </location>
</feature>
<feature type="compositionally biased region" description="Basic and acidic residues" evidence="2">
    <location>
        <begin position="403"/>
        <end position="415"/>
    </location>
</feature>
<feature type="compositionally biased region" description="Basic and acidic residues" evidence="2">
    <location>
        <begin position="475"/>
        <end position="491"/>
    </location>
</feature>
<evidence type="ECO:0000250" key="1">
    <source>
        <dbReference type="UniProtKB" id="O94874"/>
    </source>
</evidence>
<evidence type="ECO:0000256" key="2">
    <source>
        <dbReference type="SAM" id="MobiDB-lite"/>
    </source>
</evidence>
<evidence type="ECO:0000305" key="3"/>
<sequence>MDAELLELQRQLEAAQSARSSVRLSERNVVELVQKLQERGIIDFELLHTTSGKEYITSDHLKHEIKMEIKKRGRASLVDLSDILGVDLYHVERQSQKVVADDPSLMLINGEIMSQSYWDTVTEEINEKLQERSQIALAEIAAQLHIGSELVVNILEPRLGTIVKGRLEGGQLYTPAYVSRITAMVRGAARGITVPTNLPSVWNSLQLQLQEMHGASGVSVEGSFFQSIFNGLLKEGVVLGSVRAGVQWTPAVFAHAQKESVDAFFSQNSYIGYEVLQKLAIPQPKQYLEARYPDGIALEAVFVHPSVVDMLDAAVGDTIENGQWIDALSVLPSYITGPDATKILSLCPSLQKAIKSSKAVVFGESCVFSNAFIKGIFDRLEKEMDSFGIKHSAGQGKPSNMSSEHRIGSDGKDLGDNDTSSIGASSDKGPKKKRGKVSGSAKGAAVEKDDDNEESIPVKGKKAHRKNKDAGSSGDAKHGGKKASEKTKEDNTNIFPDDLIEQKVLTVAPELEELGGSDDLNGPLKLLSSHLRPMLMDAWMKKRNTMLSENAERRRRLLDNLQKQLDEAVLDMQLYEKSLDVFEDDPATSAILHKHLLRTMGAPVVDKILLTLHKDNKLKNGMDVEDSEENVQLSTADRTSLAKDLPGSLSVKAQALAETLEGKRFDSFMDALRDTAEESGLLFKKLDKRLERSMLHSYRKDLTAQVSSENDPISFLPKVVALLFLQAYNKALQAPGRAVGAVIALLKDKIPAPTYKVLADYHSTTVKVLALQAAATEDGEDCATDRMLERKEDLEERLMPELKSLVLGTSKE</sequence>
<gene>
    <name type="ORF">OsI_18219</name>
</gene>
<name>UFL1_ORYSI</name>
<dbReference type="EC" id="2.3.2.-"/>
<dbReference type="EMBL" id="CM000130">
    <property type="protein sequence ID" value="EEC78414.1"/>
    <property type="molecule type" value="Genomic_DNA"/>
</dbReference>
<dbReference type="SMR" id="B8AXB6"/>
<dbReference type="STRING" id="39946.B8AXB6"/>
<dbReference type="EnsemblPlants" id="BGIOSGA019066-TA">
    <property type="protein sequence ID" value="BGIOSGA019066-PA"/>
    <property type="gene ID" value="BGIOSGA019066"/>
</dbReference>
<dbReference type="Gramene" id="BGIOSGA019066-TA">
    <property type="protein sequence ID" value="BGIOSGA019066-PA"/>
    <property type="gene ID" value="BGIOSGA019066"/>
</dbReference>
<dbReference type="HOGENOM" id="CLU_012417_0_0_1"/>
<dbReference type="OMA" id="CILHASG"/>
<dbReference type="Proteomes" id="UP000007015">
    <property type="component" value="Chromosome 5"/>
</dbReference>
<dbReference type="GO" id="GO:0005789">
    <property type="term" value="C:endoplasmic reticulum membrane"/>
    <property type="evidence" value="ECO:0007669"/>
    <property type="project" value="TreeGrafter"/>
</dbReference>
<dbReference type="GO" id="GO:0061666">
    <property type="term" value="F:UFM1 ligase activity"/>
    <property type="evidence" value="ECO:0007669"/>
    <property type="project" value="InterPro"/>
</dbReference>
<dbReference type="GO" id="GO:1990592">
    <property type="term" value="P:protein K69-linked ufmylation"/>
    <property type="evidence" value="ECO:0007669"/>
    <property type="project" value="TreeGrafter"/>
</dbReference>
<dbReference type="GO" id="GO:0032434">
    <property type="term" value="P:regulation of proteasomal ubiquitin-dependent protein catabolic process"/>
    <property type="evidence" value="ECO:0007669"/>
    <property type="project" value="TreeGrafter"/>
</dbReference>
<dbReference type="GO" id="GO:0034976">
    <property type="term" value="P:response to endoplasmic reticulum stress"/>
    <property type="evidence" value="ECO:0007669"/>
    <property type="project" value="TreeGrafter"/>
</dbReference>
<dbReference type="InterPro" id="IPR018611">
    <property type="entry name" value="Ufl1"/>
</dbReference>
<dbReference type="InterPro" id="IPR056761">
    <property type="entry name" value="Ufl1-like_C"/>
</dbReference>
<dbReference type="InterPro" id="IPR056580">
    <property type="entry name" value="Ufl1_dom"/>
</dbReference>
<dbReference type="InterPro" id="IPR056579">
    <property type="entry name" value="Ufl1_N"/>
</dbReference>
<dbReference type="PANTHER" id="PTHR31057">
    <property type="entry name" value="E3 UFM1-PROTEIN LIGASE 1"/>
    <property type="match status" value="1"/>
</dbReference>
<dbReference type="PANTHER" id="PTHR31057:SF0">
    <property type="entry name" value="E3 UFM1-PROTEIN LIGASE 1"/>
    <property type="match status" value="1"/>
</dbReference>
<dbReference type="Pfam" id="PF09743">
    <property type="entry name" value="E3_UFM1_ligase"/>
    <property type="match status" value="1"/>
</dbReference>
<dbReference type="Pfam" id="PF23659">
    <property type="entry name" value="UFL1"/>
    <property type="match status" value="1"/>
</dbReference>
<dbReference type="Pfam" id="PF25041">
    <property type="entry name" value="UFL1_C"/>
    <property type="match status" value="1"/>
</dbReference>
<protein>
    <recommendedName>
        <fullName>E3 UFM1-protein ligase 1 homolog</fullName>
        <ecNumber>2.3.2.-</ecNumber>
    </recommendedName>
    <alternativeName>
        <fullName evidence="3">E3 UFM1-protein transferase 1 homolog</fullName>
    </alternativeName>
</protein>